<proteinExistence type="inferred from homology"/>
<comment type="function">
    <text evidence="1">Catalyzes the conversion of 1-hydroxy-2-methyl-2-(E)-butenyl 4-diphosphate (HMBPP) into a mixture of isopentenyl diphosphate (IPP) and dimethylallyl diphosphate (DMAPP). Acts in the terminal step of the DOXP/MEP pathway for isoprenoid precursor biosynthesis.</text>
</comment>
<comment type="catalytic activity">
    <reaction evidence="1">
        <text>isopentenyl diphosphate + 2 oxidized [2Fe-2S]-[ferredoxin] + H2O = (2E)-4-hydroxy-3-methylbut-2-enyl diphosphate + 2 reduced [2Fe-2S]-[ferredoxin] + 2 H(+)</text>
        <dbReference type="Rhea" id="RHEA:24488"/>
        <dbReference type="Rhea" id="RHEA-COMP:10000"/>
        <dbReference type="Rhea" id="RHEA-COMP:10001"/>
        <dbReference type="ChEBI" id="CHEBI:15377"/>
        <dbReference type="ChEBI" id="CHEBI:15378"/>
        <dbReference type="ChEBI" id="CHEBI:33737"/>
        <dbReference type="ChEBI" id="CHEBI:33738"/>
        <dbReference type="ChEBI" id="CHEBI:128753"/>
        <dbReference type="ChEBI" id="CHEBI:128769"/>
        <dbReference type="EC" id="1.17.7.4"/>
    </reaction>
</comment>
<comment type="catalytic activity">
    <reaction evidence="1">
        <text>dimethylallyl diphosphate + 2 oxidized [2Fe-2S]-[ferredoxin] + H2O = (2E)-4-hydroxy-3-methylbut-2-enyl diphosphate + 2 reduced [2Fe-2S]-[ferredoxin] + 2 H(+)</text>
        <dbReference type="Rhea" id="RHEA:24825"/>
        <dbReference type="Rhea" id="RHEA-COMP:10000"/>
        <dbReference type="Rhea" id="RHEA-COMP:10001"/>
        <dbReference type="ChEBI" id="CHEBI:15377"/>
        <dbReference type="ChEBI" id="CHEBI:15378"/>
        <dbReference type="ChEBI" id="CHEBI:33737"/>
        <dbReference type="ChEBI" id="CHEBI:33738"/>
        <dbReference type="ChEBI" id="CHEBI:57623"/>
        <dbReference type="ChEBI" id="CHEBI:128753"/>
        <dbReference type="EC" id="1.17.7.4"/>
    </reaction>
</comment>
<comment type="cofactor">
    <cofactor evidence="1">
        <name>[4Fe-4S] cluster</name>
        <dbReference type="ChEBI" id="CHEBI:49883"/>
    </cofactor>
    <text evidence="1">Binds 1 [4Fe-4S] cluster per subunit.</text>
</comment>
<comment type="pathway">
    <text evidence="1">Isoprenoid biosynthesis; dimethylallyl diphosphate biosynthesis; dimethylallyl diphosphate from (2E)-4-hydroxy-3-methylbutenyl diphosphate: step 1/1.</text>
</comment>
<comment type="pathway">
    <text evidence="1">Isoprenoid biosynthesis; isopentenyl diphosphate biosynthesis via DXP pathway; isopentenyl diphosphate from 1-deoxy-D-xylulose 5-phosphate: step 6/6.</text>
</comment>
<comment type="subunit">
    <text evidence="1">Homodimer.</text>
</comment>
<comment type="similarity">
    <text evidence="1">Belongs to the IspH family.</text>
</comment>
<comment type="sequence caution" evidence="2">
    <conflict type="erroneous initiation">
        <sequence resource="EMBL-CDS" id="AAN78533"/>
    </conflict>
</comment>
<protein>
    <recommendedName>
        <fullName evidence="1">4-hydroxy-3-methylbut-2-enyl diphosphate reductase</fullName>
        <shortName evidence="1">HMBPP reductase</shortName>
        <ecNumber evidence="1">1.17.7.4</ecNumber>
    </recommendedName>
</protein>
<organism>
    <name type="scientific">Escherichia coli O6:H1 (strain CFT073 / ATCC 700928 / UPEC)</name>
    <dbReference type="NCBI Taxonomy" id="199310"/>
    <lineage>
        <taxon>Bacteria</taxon>
        <taxon>Pseudomonadati</taxon>
        <taxon>Pseudomonadota</taxon>
        <taxon>Gammaproteobacteria</taxon>
        <taxon>Enterobacterales</taxon>
        <taxon>Enterobacteriaceae</taxon>
        <taxon>Escherichia</taxon>
    </lineage>
</organism>
<evidence type="ECO:0000255" key="1">
    <source>
        <dbReference type="HAMAP-Rule" id="MF_00191"/>
    </source>
</evidence>
<evidence type="ECO:0000305" key="2"/>
<sequence length="316" mass="34775">MQILLANPRGFCAGVDRAISIVENALAIYGAPIYVRHEVVHNRYVVDSLRERGAIFIEQISEVPDGAILIFSAHGVSQAVRNEAKSRDLTVFDATCPLVTKVHMEVARASRRGEESILIGHAGHPEVEGTMGQYSNPEGGMYLVESPDDVWKLTVKNEEKLSFMTQTTLSVDDTSDVIDALRKRFPKIVGPRKDDICYATTNRQEAVRALAEQAEVVLVVGSKNSSNSNRLAELAQRMGKRAFLIDDAKDIQEEWVKEVKCVGVTAGASAPDILVQNVVARLQQLGGGEAIPLEGREENIVFEVPKELRVDIREVD</sequence>
<feature type="chain" id="PRO_0000128813" description="4-hydroxy-3-methylbut-2-enyl diphosphate reductase">
    <location>
        <begin position="1"/>
        <end position="316"/>
    </location>
</feature>
<feature type="active site" description="Proton donor" evidence="1">
    <location>
        <position position="126"/>
    </location>
</feature>
<feature type="binding site" evidence="1">
    <location>
        <position position="12"/>
    </location>
    <ligand>
        <name>[4Fe-4S] cluster</name>
        <dbReference type="ChEBI" id="CHEBI:49883"/>
    </ligand>
</feature>
<feature type="binding site" evidence="1">
    <location>
        <position position="41"/>
    </location>
    <ligand>
        <name>(2E)-4-hydroxy-3-methylbut-2-enyl diphosphate</name>
        <dbReference type="ChEBI" id="CHEBI:128753"/>
    </ligand>
</feature>
<feature type="binding site" evidence="1">
    <location>
        <position position="41"/>
    </location>
    <ligand>
        <name>dimethylallyl diphosphate</name>
        <dbReference type="ChEBI" id="CHEBI:57623"/>
    </ligand>
</feature>
<feature type="binding site" evidence="1">
    <location>
        <position position="41"/>
    </location>
    <ligand>
        <name>isopentenyl diphosphate</name>
        <dbReference type="ChEBI" id="CHEBI:128769"/>
    </ligand>
</feature>
<feature type="binding site" evidence="1">
    <location>
        <position position="74"/>
    </location>
    <ligand>
        <name>(2E)-4-hydroxy-3-methylbut-2-enyl diphosphate</name>
        <dbReference type="ChEBI" id="CHEBI:128753"/>
    </ligand>
</feature>
<feature type="binding site" evidence="1">
    <location>
        <position position="74"/>
    </location>
    <ligand>
        <name>dimethylallyl diphosphate</name>
        <dbReference type="ChEBI" id="CHEBI:57623"/>
    </ligand>
</feature>
<feature type="binding site" evidence="1">
    <location>
        <position position="74"/>
    </location>
    <ligand>
        <name>isopentenyl diphosphate</name>
        <dbReference type="ChEBI" id="CHEBI:128769"/>
    </ligand>
</feature>
<feature type="binding site" evidence="1">
    <location>
        <position position="96"/>
    </location>
    <ligand>
        <name>[4Fe-4S] cluster</name>
        <dbReference type="ChEBI" id="CHEBI:49883"/>
    </ligand>
</feature>
<feature type="binding site" evidence="1">
    <location>
        <position position="124"/>
    </location>
    <ligand>
        <name>(2E)-4-hydroxy-3-methylbut-2-enyl diphosphate</name>
        <dbReference type="ChEBI" id="CHEBI:128753"/>
    </ligand>
</feature>
<feature type="binding site" evidence="1">
    <location>
        <position position="124"/>
    </location>
    <ligand>
        <name>dimethylallyl diphosphate</name>
        <dbReference type="ChEBI" id="CHEBI:57623"/>
    </ligand>
</feature>
<feature type="binding site" evidence="1">
    <location>
        <position position="124"/>
    </location>
    <ligand>
        <name>isopentenyl diphosphate</name>
        <dbReference type="ChEBI" id="CHEBI:128769"/>
    </ligand>
</feature>
<feature type="binding site" evidence="1">
    <location>
        <position position="167"/>
    </location>
    <ligand>
        <name>(2E)-4-hydroxy-3-methylbut-2-enyl diphosphate</name>
        <dbReference type="ChEBI" id="CHEBI:128753"/>
    </ligand>
</feature>
<feature type="binding site" evidence="1">
    <location>
        <position position="197"/>
    </location>
    <ligand>
        <name>[4Fe-4S] cluster</name>
        <dbReference type="ChEBI" id="CHEBI:49883"/>
    </ligand>
</feature>
<feature type="binding site" evidence="1">
    <location>
        <position position="225"/>
    </location>
    <ligand>
        <name>(2E)-4-hydroxy-3-methylbut-2-enyl diphosphate</name>
        <dbReference type="ChEBI" id="CHEBI:128753"/>
    </ligand>
</feature>
<feature type="binding site" evidence="1">
    <location>
        <position position="225"/>
    </location>
    <ligand>
        <name>dimethylallyl diphosphate</name>
        <dbReference type="ChEBI" id="CHEBI:57623"/>
    </ligand>
</feature>
<feature type="binding site" evidence="1">
    <location>
        <position position="225"/>
    </location>
    <ligand>
        <name>isopentenyl diphosphate</name>
        <dbReference type="ChEBI" id="CHEBI:128769"/>
    </ligand>
</feature>
<feature type="binding site" evidence="1">
    <location>
        <position position="226"/>
    </location>
    <ligand>
        <name>(2E)-4-hydroxy-3-methylbut-2-enyl diphosphate</name>
        <dbReference type="ChEBI" id="CHEBI:128753"/>
    </ligand>
</feature>
<feature type="binding site" evidence="1">
    <location>
        <position position="226"/>
    </location>
    <ligand>
        <name>dimethylallyl diphosphate</name>
        <dbReference type="ChEBI" id="CHEBI:57623"/>
    </ligand>
</feature>
<feature type="binding site" evidence="1">
    <location>
        <position position="226"/>
    </location>
    <ligand>
        <name>isopentenyl diphosphate</name>
        <dbReference type="ChEBI" id="CHEBI:128769"/>
    </ligand>
</feature>
<feature type="binding site" evidence="1">
    <location>
        <position position="227"/>
    </location>
    <ligand>
        <name>(2E)-4-hydroxy-3-methylbut-2-enyl diphosphate</name>
        <dbReference type="ChEBI" id="CHEBI:128753"/>
    </ligand>
</feature>
<feature type="binding site" evidence="1">
    <location>
        <position position="227"/>
    </location>
    <ligand>
        <name>dimethylallyl diphosphate</name>
        <dbReference type="ChEBI" id="CHEBI:57623"/>
    </ligand>
</feature>
<feature type="binding site" evidence="1">
    <location>
        <position position="227"/>
    </location>
    <ligand>
        <name>isopentenyl diphosphate</name>
        <dbReference type="ChEBI" id="CHEBI:128769"/>
    </ligand>
</feature>
<feature type="binding site" evidence="1">
    <location>
        <position position="269"/>
    </location>
    <ligand>
        <name>(2E)-4-hydroxy-3-methylbut-2-enyl diphosphate</name>
        <dbReference type="ChEBI" id="CHEBI:128753"/>
    </ligand>
</feature>
<feature type="binding site" evidence="1">
    <location>
        <position position="269"/>
    </location>
    <ligand>
        <name>dimethylallyl diphosphate</name>
        <dbReference type="ChEBI" id="CHEBI:57623"/>
    </ligand>
</feature>
<feature type="binding site" evidence="1">
    <location>
        <position position="269"/>
    </location>
    <ligand>
        <name>isopentenyl diphosphate</name>
        <dbReference type="ChEBI" id="CHEBI:128769"/>
    </ligand>
</feature>
<reference key="1">
    <citation type="journal article" date="2002" name="Proc. Natl. Acad. Sci. U.S.A.">
        <title>Extensive mosaic structure revealed by the complete genome sequence of uropathogenic Escherichia coli.</title>
        <authorList>
            <person name="Welch R.A."/>
            <person name="Burland V."/>
            <person name="Plunkett G. III"/>
            <person name="Redford P."/>
            <person name="Roesch P."/>
            <person name="Rasko D."/>
            <person name="Buckles E.L."/>
            <person name="Liou S.-R."/>
            <person name="Boutin A."/>
            <person name="Hackett J."/>
            <person name="Stroud D."/>
            <person name="Mayhew G.F."/>
            <person name="Rose D.J."/>
            <person name="Zhou S."/>
            <person name="Schwartz D.C."/>
            <person name="Perna N.T."/>
            <person name="Mobley H.L.T."/>
            <person name="Donnenberg M.S."/>
            <person name="Blattner F.R."/>
        </authorList>
    </citation>
    <scope>NUCLEOTIDE SEQUENCE [LARGE SCALE GENOMIC DNA]</scope>
    <source>
        <strain>CFT073 / ATCC 700928 / UPEC</strain>
    </source>
</reference>
<keyword id="KW-0004">4Fe-4S</keyword>
<keyword id="KW-0408">Iron</keyword>
<keyword id="KW-0411">Iron-sulfur</keyword>
<keyword id="KW-0414">Isoprene biosynthesis</keyword>
<keyword id="KW-0479">Metal-binding</keyword>
<keyword id="KW-0560">Oxidoreductase</keyword>
<keyword id="KW-1185">Reference proteome</keyword>
<gene>
    <name evidence="1" type="primary">ispH</name>
    <name type="synonym">lytB</name>
    <name type="ordered locus">c0033</name>
</gene>
<name>ISPH_ECOL6</name>
<dbReference type="EC" id="1.17.7.4" evidence="1"/>
<dbReference type="EMBL" id="AE014075">
    <property type="protein sequence ID" value="AAN78533.1"/>
    <property type="status" value="ALT_INIT"/>
    <property type="molecule type" value="Genomic_DNA"/>
</dbReference>
<dbReference type="RefSeq" id="WP_001166395.1">
    <property type="nucleotide sequence ID" value="NZ_CP051263.1"/>
</dbReference>
<dbReference type="SMR" id="P62624"/>
<dbReference type="STRING" id="199310.c0033"/>
<dbReference type="GeneID" id="93777407"/>
<dbReference type="KEGG" id="ecc:c0033"/>
<dbReference type="eggNOG" id="COG0761">
    <property type="taxonomic scope" value="Bacteria"/>
</dbReference>
<dbReference type="HOGENOM" id="CLU_027486_1_0_6"/>
<dbReference type="UniPathway" id="UPA00056">
    <property type="reaction ID" value="UER00097"/>
</dbReference>
<dbReference type="UniPathway" id="UPA00059">
    <property type="reaction ID" value="UER00105"/>
</dbReference>
<dbReference type="Proteomes" id="UP000001410">
    <property type="component" value="Chromosome"/>
</dbReference>
<dbReference type="GO" id="GO:0051539">
    <property type="term" value="F:4 iron, 4 sulfur cluster binding"/>
    <property type="evidence" value="ECO:0007669"/>
    <property type="project" value="UniProtKB-UniRule"/>
</dbReference>
<dbReference type="GO" id="GO:0051745">
    <property type="term" value="F:4-hydroxy-3-methylbut-2-enyl diphosphate reductase activity"/>
    <property type="evidence" value="ECO:0007669"/>
    <property type="project" value="UniProtKB-UniRule"/>
</dbReference>
<dbReference type="GO" id="GO:0046872">
    <property type="term" value="F:metal ion binding"/>
    <property type="evidence" value="ECO:0007669"/>
    <property type="project" value="UniProtKB-KW"/>
</dbReference>
<dbReference type="GO" id="GO:0050992">
    <property type="term" value="P:dimethylallyl diphosphate biosynthetic process"/>
    <property type="evidence" value="ECO:0007669"/>
    <property type="project" value="UniProtKB-UniRule"/>
</dbReference>
<dbReference type="GO" id="GO:0019288">
    <property type="term" value="P:isopentenyl diphosphate biosynthetic process, methylerythritol 4-phosphate pathway"/>
    <property type="evidence" value="ECO:0007669"/>
    <property type="project" value="UniProtKB-UniRule"/>
</dbReference>
<dbReference type="GO" id="GO:0016114">
    <property type="term" value="P:terpenoid biosynthetic process"/>
    <property type="evidence" value="ECO:0007669"/>
    <property type="project" value="UniProtKB-UniRule"/>
</dbReference>
<dbReference type="CDD" id="cd13944">
    <property type="entry name" value="lytB_ispH"/>
    <property type="match status" value="1"/>
</dbReference>
<dbReference type="FunFam" id="3.40.1010.20:FF:000001">
    <property type="entry name" value="4-hydroxy-3-methylbut-2-enyl diphosphate reductase"/>
    <property type="match status" value="1"/>
</dbReference>
<dbReference type="FunFam" id="3.40.50.11270:FF:000001">
    <property type="entry name" value="4-hydroxy-3-methylbut-2-enyl diphosphate reductase"/>
    <property type="match status" value="1"/>
</dbReference>
<dbReference type="Gene3D" id="3.40.50.11270">
    <property type="match status" value="1"/>
</dbReference>
<dbReference type="Gene3D" id="3.40.1010.20">
    <property type="entry name" value="4-hydroxy-3-methylbut-2-enyl diphosphate reductase, catalytic domain"/>
    <property type="match status" value="2"/>
</dbReference>
<dbReference type="HAMAP" id="MF_00191">
    <property type="entry name" value="IspH"/>
    <property type="match status" value="1"/>
</dbReference>
<dbReference type="InterPro" id="IPR003451">
    <property type="entry name" value="LytB/IspH"/>
</dbReference>
<dbReference type="NCBIfam" id="TIGR00216">
    <property type="entry name" value="ispH_lytB"/>
    <property type="match status" value="1"/>
</dbReference>
<dbReference type="NCBIfam" id="NF002188">
    <property type="entry name" value="PRK01045.1-2"/>
    <property type="match status" value="1"/>
</dbReference>
<dbReference type="NCBIfam" id="NF002190">
    <property type="entry name" value="PRK01045.1-4"/>
    <property type="match status" value="1"/>
</dbReference>
<dbReference type="PANTHER" id="PTHR30426">
    <property type="entry name" value="4-HYDROXY-3-METHYLBUT-2-ENYL DIPHOSPHATE REDUCTASE"/>
    <property type="match status" value="1"/>
</dbReference>
<dbReference type="PANTHER" id="PTHR30426:SF0">
    <property type="entry name" value="4-HYDROXY-3-METHYLBUT-2-ENYL DIPHOSPHATE REDUCTASE"/>
    <property type="match status" value="1"/>
</dbReference>
<dbReference type="Pfam" id="PF02401">
    <property type="entry name" value="LYTB"/>
    <property type="match status" value="1"/>
</dbReference>
<accession>P62624</accession>
<accession>P22565</accession>